<feature type="signal peptide" evidence="3">
    <location>
        <begin position="1"/>
        <end position="27"/>
    </location>
</feature>
<feature type="chain" id="PRO_0000278116" description="Proto-oncogene tyrosine-protein kinase ROS">
    <location>
        <begin position="28"/>
        <end position="2338"/>
    </location>
</feature>
<feature type="topological domain" description="Extracellular" evidence="3">
    <location>
        <begin position="28"/>
        <end position="1853"/>
    </location>
</feature>
<feature type="transmembrane region" description="Helical" evidence="3">
    <location>
        <begin position="1854"/>
        <end position="1874"/>
    </location>
</feature>
<feature type="topological domain" description="Cytoplasmic" evidence="3">
    <location>
        <begin position="1875"/>
        <end position="2338"/>
    </location>
</feature>
<feature type="domain" description="Fibronectin type-III 1" evidence="5">
    <location>
        <begin position="110"/>
        <end position="205"/>
    </location>
</feature>
<feature type="domain" description="Fibronectin type-III 2" evidence="5">
    <location>
        <begin position="206"/>
        <end position="294"/>
    </location>
</feature>
<feature type="domain" description="Fibronectin type-III 3" evidence="5">
    <location>
        <begin position="566"/>
        <end position="666"/>
    </location>
</feature>
<feature type="domain" description="Fibronectin type-III 4" evidence="5">
    <location>
        <begin position="942"/>
        <end position="1037"/>
    </location>
</feature>
<feature type="domain" description="Fibronectin type-III 5" evidence="5">
    <location>
        <begin position="1038"/>
        <end position="1145"/>
    </location>
</feature>
<feature type="domain" description="Fibronectin type-III 6" evidence="5">
    <location>
        <begin position="1440"/>
        <end position="1548"/>
    </location>
</feature>
<feature type="domain" description="Fibronectin type-III 7" evidence="5">
    <location>
        <begin position="1549"/>
        <end position="1648"/>
    </location>
</feature>
<feature type="domain" description="Fibronectin type-III 8" evidence="5">
    <location>
        <begin position="1650"/>
        <end position="1743"/>
    </location>
</feature>
<feature type="domain" description="Fibronectin type-III 9" evidence="5">
    <location>
        <begin position="1744"/>
        <end position="1845"/>
    </location>
</feature>
<feature type="domain" description="Protein kinase" evidence="4">
    <location>
        <begin position="1937"/>
        <end position="2210"/>
    </location>
</feature>
<feature type="region of interest" description="Disordered" evidence="7">
    <location>
        <begin position="2277"/>
        <end position="2314"/>
    </location>
</feature>
<feature type="compositionally biased region" description="Basic and acidic residues" evidence="7">
    <location>
        <begin position="2289"/>
        <end position="2306"/>
    </location>
</feature>
<feature type="active site" description="Proton acceptor" evidence="4 6">
    <location>
        <position position="2071"/>
    </location>
</feature>
<feature type="binding site" evidence="4">
    <location>
        <begin position="1943"/>
        <end position="1951"/>
    </location>
    <ligand>
        <name>ATP</name>
        <dbReference type="ChEBI" id="CHEBI:30616"/>
    </ligand>
</feature>
<feature type="binding site" evidence="4">
    <location>
        <position position="1972"/>
    </location>
    <ligand>
        <name>ATP</name>
        <dbReference type="ChEBI" id="CHEBI:30616"/>
    </ligand>
</feature>
<feature type="modified residue" description="Phosphotyrosine; by autocatalysis" evidence="1">
    <location>
        <position position="2266"/>
    </location>
</feature>
<feature type="modified residue" description="Phosphotyrosine; by autocatalysis" evidence="1">
    <location>
        <position position="2325"/>
    </location>
</feature>
<feature type="glycosylation site" description="N-linked (GlcNAc...) asparagine" evidence="3">
    <location>
        <position position="52"/>
    </location>
</feature>
<feature type="glycosylation site" description="N-linked (GlcNAc...) asparagine" evidence="3">
    <location>
        <position position="77"/>
    </location>
</feature>
<feature type="glycosylation site" description="N-linked (GlcNAc...) asparagine" evidence="3">
    <location>
        <position position="333"/>
    </location>
</feature>
<feature type="glycosylation site" description="N-linked (GlcNAc...) asparagine" evidence="3">
    <location>
        <position position="361"/>
    </location>
</feature>
<feature type="glycosylation site" description="N-linked (GlcNAc...) asparagine" evidence="3">
    <location>
        <position position="480"/>
    </location>
</feature>
<feature type="glycosylation site" description="N-linked (GlcNAc...) asparagine" evidence="3">
    <location>
        <position position="623"/>
    </location>
</feature>
<feature type="glycosylation site" description="N-linked (GlcNAc...) asparagine" evidence="3">
    <location>
        <position position="934"/>
    </location>
</feature>
<feature type="glycosylation site" description="N-linked (GlcNAc...) asparagine" evidence="3">
    <location>
        <position position="1010"/>
    </location>
</feature>
<feature type="glycosylation site" description="N-linked (GlcNAc...) asparagine" evidence="3">
    <location>
        <position position="1298"/>
    </location>
</feature>
<feature type="glycosylation site" description="N-linked (GlcNAc...) asparagine" evidence="3">
    <location>
        <position position="1675"/>
    </location>
</feature>
<feature type="splice variant" id="VSP_023127" description="In isoform 2." evidence="9">
    <location>
        <begin position="431"/>
        <end position="451"/>
    </location>
</feature>
<feature type="sequence conflict" description="In Ref. 1; AAA40967." evidence="10" ref="1">
    <original>VW</original>
    <variation>AC</variation>
    <location>
        <begin position="1873"/>
        <end position="1874"/>
    </location>
</feature>
<sequence>MKRIRWLTPKPATFVVLGCVWISVAQGTILSSCLTSCVTNLGRQLDSGTRYNLSEACIQGCQFWNSIDQEKCALKCNDTYVTICERESCEVGCSNAEGSYEEEVLDNTELPTAPFASSIGSNGVTLRWNPANISGVKYIIQWKYAQLPGSWAYTETVSKLSYMVEPLHPFTEYIFRVVWIFTAQLHLYSPPSPSYRTHPYGVPETAPFITNIESSSPDTVEVSWAPPYFPGGPILGYNLRLISKTQKLDSGTQRTSFQFYSTLPNTTYRFSIAAVNEVGEGPEAESMITTPSPAVQEEEQWLFLSRKTSLRKRSLKYLVDEAHCLWSDAIRHNITGISVNTQQEVVYFSEGTIIWMKGAANMSDVSDLRIFYRGSALVSSISVDWLYQRMYFIMDNRVHVCDLKHCSNLEEITPFSIVAPQKVVVDSYNGYVFYLLRDGIYRVHLPLPSVRDTKAVRIVESGTLKDFAVKPQSKRIIYFNGTMQVFMSTFLDGSAFHRVLPWVPLADVKSFACENNDFLITDGKAIFQQDSLSFNEFIVGCDLSHIEEFGFGNLVIFGSSVQSYPLPGHPQEVSVLFGSREALIQWKPPILAIGASPSAWQNWTYEVKVSSQDILETTQVFLNISRTVLNVPKLQSSTKYMVSVRASSPKGPGPWSEPSVGTTLVPATEPPFIMAVKEDGLWSKPLSSFGPGEFLSSDVGNVSDMDWYNNSLYYSDTKGNVYVRPLNGMDISENYHISSIAGACALAFEWLGHFLYWAGKTYVIQRQSVLTGHTDIVTHVKLLVNDMAVDPVGGYLYWTTLYSVESTRLNGESSLVLQAQPWLSGKKVIALTLDLSDGLLYWLVQDNQCIHLYTAVLRGWSGADATITEFAAWSTSEISQNALMYYSGRLFWINGFRIITAQEIGQRTSVSVSEPGKFNQFTIIQTSLKPLPGNFSSTPTVIPDSVQESSFRIEGHTSSFRILWNEPPAVDWGIVFYSVEFSAHSKFLAIEQQSLPVFTVEGLEPYALFNLSVTPYTYWGKGQKTSLSFRAPESVPSAPENPRIFILSLGRYTRKNEVVVEFRWNKPKHENGVLTKSEIFYHISKQSGTNKSTEDWVSVSVTPPVMSFQLEAMSPGYIVSFQVRVFTSKGPGPFSDIVMSKTSEIKPCPYLISLLGNKIEFLDMDQNQVVWTFSLEGAVSTVGYTADDEMGYFAQGDALFLLNLHNHSSSKLFQDVLASDIAVIAVDWIARHLYFALKASQDGTQIFDVDLEHKVKSPREVKICKSHTAIISFSMYPLLSRLYWTEVSDLGYQMFYCNISSHTLHHVLQPKASNQHGRRQCSCNVTESELSGAMTVDTSDPDRPWIYFTKQQEIWAMDLEGCQCWKVIMVPATPGKRIISLTVDGEFIYWITTMKDDTEIYQAKKGSGAILSQVKAPRSKHILAYSSALQPFPDKAYLSVASNMVEASILNATNTSLILKLPPVKTNLTWHGITTPTSTYLVYYMEANRANSSDRKHNMLESQENVARIEGLQPFSTYVIQIAVKNYYSDPLEHLSLGKEIQGKTKSGVPGAVCHINATVLSDTSLLVFWTESHKPNGPKELVRYQLVMSYLAPIPETPLRQDEFPSARLSLLVTKLSGGQQYVLKILACHSEEMWCTESHPVSVNMFDTPEKPSALVPENTSLLLDWKAPSNANLTRFWFELQKWKYSEFYHVKASCSQGPVYVCNIANLQPYTPYNIRVVVVYTTGENSSSIPESFKTKAGVPSKPGIPKLLEGSKNSIQWEKAEDNGNRLMYYTLEVRKSISNDSRDQSLRWTAVFNGSCSSICTWRSKNLKGTFQFRAVASNAIGFGEYSEISEDITLVEDGFWITETSFILTIIVGIFLVATVPLTFVWHRSLKNHKATKEGLSVLNDNDQELAELRGLAAGVGLANACYAVHTLPTQEEIESLPAFPREKLSLRLLLGSGAFGEVYEGTAVDILGRGSGEIKVAVKTLKKGSTDQEKIEFLKEAHLMSKFNHPNILKQLGVCLLSEPQYIILELMEGGDLLSYLRKARGTTLSGPLLTLADLVELCVDISKGCVYLEQMHFIHRDLAARNCLVSVKDYTSPRVVKIGDFGLAREIYKHDYYRKRGEGLLPVRWMAPENLMDGIFTSQSDVWSFGILVWEILTLGHQPYPAHSNLDVLNYVQAGGRLEPPRNCPDDLWNLMFRCWAQEPDQRPTFYNIQDQLQLFRNVSLNNVSHCGQAAPAGGVINKGFEGEDNEMATLNSDDTMPVALMETRNQEGLNYMVLATKCSQSEDRYEGPLGSKESGLHDLKKDERQPADKDFCQQPQVAYGSPGHSEGLNYACLAHSGHGDVSE</sequence>
<accession>Q63132</accession>
<accession>Q63130</accession>
<accession>Q63131</accession>
<proteinExistence type="evidence at transcript level"/>
<protein>
    <recommendedName>
        <fullName>Proto-oncogene tyrosine-protein kinase ROS</fullName>
        <ecNumber evidence="1">2.7.10.1</ecNumber>
    </recommendedName>
    <alternativeName>
        <fullName>Proto-oncogene c-Ros</fullName>
    </alternativeName>
    <alternativeName>
        <fullName>Proto-oncogene c-Ros-1</fullName>
    </alternativeName>
    <alternativeName>
        <fullName>Receptor tyrosine kinase c-ros oncogene 1</fullName>
    </alternativeName>
    <alternativeName>
        <fullName>c-Ros receptor tyrosine kinase</fullName>
    </alternativeName>
</protein>
<comment type="function">
    <text evidence="1 2">Orphan receptor tyrosine kinase (RTK) that plays a role in epithelial cell differentiation and regionalization of the proximal epididymal epithelium. NELL2 is an endogenous ligand for ROS1. Upon endogenous stimulation by NELL2, ROS1 activates the intracellular signaling pathway and triggers epididymal epithelial differentiation and subsequent sperm maturation (By similarity). May activate several downstream signaling pathways related to cell differentiation, proliferation, growth and survival including the PI3 kinase-mTOR signaling pathway. Mediates the phosphorylation of PTPN11, an activator of this pathway. May also phosphorylate and activate the transcription factor STAT3 to control anchorage-independent cell growth. Mediates the phosphorylation and the activation of VAV3, a guanine nucleotide exchange factor regulating cell morphology. May activate other downstream signaling proteins including AKT1, MAPK1, MAPK3, IRS1 and PLCG2 (By similarity).</text>
</comment>
<comment type="catalytic activity">
    <reaction evidence="1">
        <text>L-tyrosyl-[protein] + ATP = O-phospho-L-tyrosyl-[protein] + ADP + H(+)</text>
        <dbReference type="Rhea" id="RHEA:10596"/>
        <dbReference type="Rhea" id="RHEA-COMP:10136"/>
        <dbReference type="Rhea" id="RHEA-COMP:20101"/>
        <dbReference type="ChEBI" id="CHEBI:15378"/>
        <dbReference type="ChEBI" id="CHEBI:30616"/>
        <dbReference type="ChEBI" id="CHEBI:46858"/>
        <dbReference type="ChEBI" id="CHEBI:61978"/>
        <dbReference type="ChEBI" id="CHEBI:456216"/>
        <dbReference type="EC" id="2.7.10.1"/>
    </reaction>
</comment>
<comment type="activity regulation">
    <text evidence="2">Inhibited by dephosphorylation by PTPN6.</text>
</comment>
<comment type="subunit">
    <text evidence="1 2">Interacts with PTPN11; may activate the PI3 kinase-mTOR signaling pathway. Interacts with VAV3; constitutive interaction mediating VAV3 phosphorylation. Interacts with PTPN6 (via SH2 1 domain); the interaction is direct and promotes ROS1 dephosphorylation (By similarity).</text>
</comment>
<comment type="subcellular location">
    <subcellularLocation>
        <location evidence="10">Cell membrane</location>
        <topology evidence="10">Single-pass type I membrane protein</topology>
    </subcellularLocation>
</comment>
<comment type="alternative products">
    <event type="alternative splicing"/>
    <isoform>
        <id>Q63132-1</id>
        <name>1</name>
        <sequence type="displayed"/>
    </isoform>
    <isoform>
        <id>Q63132-2</id>
        <name>2</name>
        <sequence type="described" ref="VSP_023127"/>
    </isoform>
</comment>
<comment type="tissue specificity">
    <text evidence="8">Expressed in heart, lung, kidney and testis.</text>
</comment>
<comment type="PTM">
    <text evidence="1 2">Phosphorylated. Probably autophosphorylates. Phosphorylation at Tyr-2266 is required for the interaction with PTPN6 that mediates ROS1 dephosphorylation (By similarity). Phosphorylation at Tyr-2266 stimulates the kinase activity and the activation of the ERK1 signaling cascade (By similarity). Phosphorylation at Tyr-2266 and/or Tyr-2325 recruits PTPN11 (By similarity).</text>
</comment>
<comment type="similarity">
    <text evidence="4">Belongs to the protein kinase superfamily. Tyr protein kinase family. Insulin receptor subfamily.</text>
</comment>
<dbReference type="EC" id="2.7.10.1" evidence="1"/>
<dbReference type="EMBL" id="M35104">
    <property type="protein sequence ID" value="AAA40966.1"/>
    <property type="molecule type" value="mRNA"/>
</dbReference>
<dbReference type="EMBL" id="M35105">
    <property type="protein sequence ID" value="AAA40967.1"/>
    <property type="molecule type" value="mRNA"/>
</dbReference>
<dbReference type="EMBL" id="M35106">
    <property type="protein sequence ID" value="AAA40968.1"/>
    <property type="molecule type" value="mRNA"/>
</dbReference>
<dbReference type="PIR" id="I73957">
    <property type="entry name" value="I73957"/>
</dbReference>
<dbReference type="RefSeq" id="NP_037006.1">
    <molecule id="Q63132-1"/>
    <property type="nucleotide sequence ID" value="NM_012874.1"/>
</dbReference>
<dbReference type="RefSeq" id="XP_008771084.1">
    <molecule id="Q63132-2"/>
    <property type="nucleotide sequence ID" value="XM_008772862.4"/>
</dbReference>
<dbReference type="SMR" id="Q63132"/>
<dbReference type="FunCoup" id="Q63132">
    <property type="interactions" value="14"/>
</dbReference>
<dbReference type="STRING" id="10116.ENSRNOP00000068996"/>
<dbReference type="GlyCosmos" id="Q63132">
    <property type="glycosylation" value="10 sites, No reported glycans"/>
</dbReference>
<dbReference type="GlyGen" id="Q63132">
    <property type="glycosylation" value="10 sites"/>
</dbReference>
<dbReference type="PhosphoSitePlus" id="Q63132"/>
<dbReference type="PaxDb" id="10116-ENSRNOP00000000459"/>
<dbReference type="GeneID" id="25346"/>
<dbReference type="KEGG" id="rno:25346"/>
<dbReference type="UCSC" id="RGD:3591">
    <molecule id="Q63132-1"/>
    <property type="organism name" value="rat"/>
</dbReference>
<dbReference type="AGR" id="RGD:3591"/>
<dbReference type="CTD" id="6098"/>
<dbReference type="RGD" id="3591">
    <property type="gene designation" value="Ros1"/>
</dbReference>
<dbReference type="VEuPathDB" id="HostDB:ENSRNOG00000000406"/>
<dbReference type="eggNOG" id="KOG1095">
    <property type="taxonomic scope" value="Eukaryota"/>
</dbReference>
<dbReference type="HOGENOM" id="CLU_000798_0_0_1"/>
<dbReference type="InParanoid" id="Q63132"/>
<dbReference type="PhylomeDB" id="Q63132"/>
<dbReference type="TreeFam" id="TF351636"/>
<dbReference type="PRO" id="PR:Q63132"/>
<dbReference type="Proteomes" id="UP000002494">
    <property type="component" value="Chromosome 20"/>
</dbReference>
<dbReference type="Bgee" id="ENSRNOG00000000406">
    <property type="expression patterns" value="Expressed in pancreas and 10 other cell types or tissues"/>
</dbReference>
<dbReference type="GO" id="GO:0009986">
    <property type="term" value="C:cell surface"/>
    <property type="evidence" value="ECO:0000266"/>
    <property type="project" value="RGD"/>
</dbReference>
<dbReference type="GO" id="GO:0048471">
    <property type="term" value="C:perinuclear region of cytoplasm"/>
    <property type="evidence" value="ECO:0000266"/>
    <property type="project" value="RGD"/>
</dbReference>
<dbReference type="GO" id="GO:0005886">
    <property type="term" value="C:plasma membrane"/>
    <property type="evidence" value="ECO:0000318"/>
    <property type="project" value="GO_Central"/>
</dbReference>
<dbReference type="GO" id="GO:0043235">
    <property type="term" value="C:receptor complex"/>
    <property type="evidence" value="ECO:0000318"/>
    <property type="project" value="GO_Central"/>
</dbReference>
<dbReference type="GO" id="GO:0005524">
    <property type="term" value="F:ATP binding"/>
    <property type="evidence" value="ECO:0007669"/>
    <property type="project" value="UniProtKB-KW"/>
</dbReference>
<dbReference type="GO" id="GO:0019903">
    <property type="term" value="F:protein phosphatase binding"/>
    <property type="evidence" value="ECO:0000266"/>
    <property type="project" value="RGD"/>
</dbReference>
<dbReference type="GO" id="GO:0004713">
    <property type="term" value="F:protein tyrosine kinase activity"/>
    <property type="evidence" value="ECO:0000250"/>
    <property type="project" value="UniProtKB"/>
</dbReference>
<dbReference type="GO" id="GO:0004714">
    <property type="term" value="F:transmembrane receptor protein tyrosine kinase activity"/>
    <property type="evidence" value="ECO:0000318"/>
    <property type="project" value="GO_Central"/>
</dbReference>
<dbReference type="GO" id="GO:0030154">
    <property type="term" value="P:cell differentiation"/>
    <property type="evidence" value="ECO:0000250"/>
    <property type="project" value="UniProtKB"/>
</dbReference>
<dbReference type="GO" id="GO:0007169">
    <property type="term" value="P:cell surface receptor protein tyrosine kinase signaling pathway"/>
    <property type="evidence" value="ECO:0000318"/>
    <property type="project" value="GO_Central"/>
</dbReference>
<dbReference type="GO" id="GO:0002066">
    <property type="term" value="P:columnar/cuboidal epithelial cell development"/>
    <property type="evidence" value="ECO:0000250"/>
    <property type="project" value="UniProtKB"/>
</dbReference>
<dbReference type="GO" id="GO:0010467">
    <property type="term" value="P:gene expression"/>
    <property type="evidence" value="ECO:0000266"/>
    <property type="project" value="RGD"/>
</dbReference>
<dbReference type="GO" id="GO:0010629">
    <property type="term" value="P:negative regulation of gene expression"/>
    <property type="evidence" value="ECO:0000266"/>
    <property type="project" value="RGD"/>
</dbReference>
<dbReference type="GO" id="GO:0006468">
    <property type="term" value="P:protein phosphorylation"/>
    <property type="evidence" value="ECO:0000250"/>
    <property type="project" value="UniProtKB"/>
</dbReference>
<dbReference type="GO" id="GO:0001558">
    <property type="term" value="P:regulation of cell growth"/>
    <property type="evidence" value="ECO:0000250"/>
    <property type="project" value="UniProtKB"/>
</dbReference>
<dbReference type="GO" id="GO:0070372">
    <property type="term" value="P:regulation of ERK1 and ERK2 cascade"/>
    <property type="evidence" value="ECO:0000250"/>
    <property type="project" value="UniProtKB"/>
</dbReference>
<dbReference type="GO" id="GO:0010966">
    <property type="term" value="P:regulation of phosphate transport"/>
    <property type="evidence" value="ECO:0000266"/>
    <property type="project" value="RGD"/>
</dbReference>
<dbReference type="GO" id="GO:0032006">
    <property type="term" value="P:regulation of TOR signaling"/>
    <property type="evidence" value="ECO:0000250"/>
    <property type="project" value="UniProtKB"/>
</dbReference>
<dbReference type="GO" id="GO:0007165">
    <property type="term" value="P:signal transduction"/>
    <property type="evidence" value="ECO:0000266"/>
    <property type="project" value="RGD"/>
</dbReference>
<dbReference type="GO" id="GO:0007283">
    <property type="term" value="P:spermatogenesis"/>
    <property type="evidence" value="ECO:0000250"/>
    <property type="project" value="UniProtKB"/>
</dbReference>
<dbReference type="CDD" id="cd00063">
    <property type="entry name" value="FN3"/>
    <property type="match status" value="7"/>
</dbReference>
<dbReference type="CDD" id="cd05044">
    <property type="entry name" value="PTKc_c-ros"/>
    <property type="match status" value="1"/>
</dbReference>
<dbReference type="FunFam" id="1.10.510.10:FF:000341">
    <property type="entry name" value="Tyrosine-protein kinase receptor"/>
    <property type="match status" value="1"/>
</dbReference>
<dbReference type="FunFam" id="2.120.10.30:FF:000038">
    <property type="entry name" value="Tyrosine-protein kinase receptor"/>
    <property type="match status" value="1"/>
</dbReference>
<dbReference type="FunFam" id="2.120.10.30:FF:000042">
    <property type="entry name" value="Tyrosine-protein kinase receptor"/>
    <property type="match status" value="1"/>
</dbReference>
<dbReference type="FunFam" id="2.120.10.30:FF:000044">
    <property type="entry name" value="Tyrosine-protein kinase receptor"/>
    <property type="match status" value="1"/>
</dbReference>
<dbReference type="FunFam" id="2.60.40.10:FF:000882">
    <property type="entry name" value="Tyrosine-protein kinase receptor"/>
    <property type="match status" value="1"/>
</dbReference>
<dbReference type="FunFam" id="2.60.40.10:FF:000984">
    <property type="entry name" value="Tyrosine-protein kinase receptor"/>
    <property type="match status" value="1"/>
</dbReference>
<dbReference type="FunFam" id="2.60.40.10:FF:001018">
    <property type="entry name" value="Tyrosine-protein kinase receptor"/>
    <property type="match status" value="1"/>
</dbReference>
<dbReference type="FunFam" id="2.60.40.10:FF:001024">
    <property type="entry name" value="Tyrosine-protein kinase receptor"/>
    <property type="match status" value="1"/>
</dbReference>
<dbReference type="FunFam" id="2.60.40.10:FF:001074">
    <property type="entry name" value="Tyrosine-protein kinase receptor"/>
    <property type="match status" value="1"/>
</dbReference>
<dbReference type="FunFam" id="2.60.40.10:FF:001237">
    <property type="entry name" value="Tyrosine-protein kinase receptor"/>
    <property type="match status" value="1"/>
</dbReference>
<dbReference type="FunFam" id="2.60.40.10:FF:001816">
    <property type="entry name" value="Tyrosine-protein kinase receptor"/>
    <property type="match status" value="1"/>
</dbReference>
<dbReference type="FunFam" id="3.30.200.20:FF:000301">
    <property type="entry name" value="Tyrosine-protein kinase receptor"/>
    <property type="match status" value="1"/>
</dbReference>
<dbReference type="Gene3D" id="2.60.40.10">
    <property type="entry name" value="Immunoglobulins"/>
    <property type="match status" value="8"/>
</dbReference>
<dbReference type="Gene3D" id="3.30.200.20">
    <property type="entry name" value="Phosphorylase Kinase, domain 1"/>
    <property type="match status" value="1"/>
</dbReference>
<dbReference type="Gene3D" id="2.120.10.30">
    <property type="entry name" value="TolB, C-terminal domain"/>
    <property type="match status" value="3"/>
</dbReference>
<dbReference type="Gene3D" id="1.10.510.10">
    <property type="entry name" value="Transferase(Phosphotransferase) domain 1"/>
    <property type="match status" value="1"/>
</dbReference>
<dbReference type="InterPro" id="IPR011042">
    <property type="entry name" value="6-blade_b-propeller_TolB-like"/>
</dbReference>
<dbReference type="InterPro" id="IPR003961">
    <property type="entry name" value="FN3_dom"/>
</dbReference>
<dbReference type="InterPro" id="IPR036116">
    <property type="entry name" value="FN3_sf"/>
</dbReference>
<dbReference type="InterPro" id="IPR013783">
    <property type="entry name" value="Ig-like_fold"/>
</dbReference>
<dbReference type="InterPro" id="IPR011009">
    <property type="entry name" value="Kinase-like_dom_sf"/>
</dbReference>
<dbReference type="InterPro" id="IPR000033">
    <property type="entry name" value="LDLR_classB_rpt"/>
</dbReference>
<dbReference type="InterPro" id="IPR000719">
    <property type="entry name" value="Prot_kinase_dom"/>
</dbReference>
<dbReference type="InterPro" id="IPR017441">
    <property type="entry name" value="Protein_kinase_ATP_BS"/>
</dbReference>
<dbReference type="InterPro" id="IPR050122">
    <property type="entry name" value="RTK"/>
</dbReference>
<dbReference type="InterPro" id="IPR001245">
    <property type="entry name" value="Ser-Thr/Tyr_kinase_cat_dom"/>
</dbReference>
<dbReference type="InterPro" id="IPR008266">
    <property type="entry name" value="Tyr_kinase_AS"/>
</dbReference>
<dbReference type="InterPro" id="IPR020635">
    <property type="entry name" value="Tyr_kinase_cat_dom"/>
</dbReference>
<dbReference type="PANTHER" id="PTHR24416:SF527">
    <property type="entry name" value="PROTO-ONCOGENE TYROSINE-PROTEIN KINASE ROS"/>
    <property type="match status" value="1"/>
</dbReference>
<dbReference type="PANTHER" id="PTHR24416">
    <property type="entry name" value="TYROSINE-PROTEIN KINASE RECEPTOR"/>
    <property type="match status" value="1"/>
</dbReference>
<dbReference type="Pfam" id="PF00041">
    <property type="entry name" value="fn3"/>
    <property type="match status" value="3"/>
</dbReference>
<dbReference type="Pfam" id="PF07714">
    <property type="entry name" value="PK_Tyr_Ser-Thr"/>
    <property type="match status" value="1"/>
</dbReference>
<dbReference type="PRINTS" id="PR00109">
    <property type="entry name" value="TYRKINASE"/>
</dbReference>
<dbReference type="SMART" id="SM00060">
    <property type="entry name" value="FN3"/>
    <property type="match status" value="9"/>
</dbReference>
<dbReference type="SMART" id="SM00135">
    <property type="entry name" value="LY"/>
    <property type="match status" value="4"/>
</dbReference>
<dbReference type="SMART" id="SM00219">
    <property type="entry name" value="TyrKc"/>
    <property type="match status" value="1"/>
</dbReference>
<dbReference type="SUPFAM" id="SSF49265">
    <property type="entry name" value="Fibronectin type III"/>
    <property type="match status" value="5"/>
</dbReference>
<dbReference type="SUPFAM" id="SSF56112">
    <property type="entry name" value="Protein kinase-like (PK-like)"/>
    <property type="match status" value="1"/>
</dbReference>
<dbReference type="SUPFAM" id="SSF63825">
    <property type="entry name" value="YWTD domain"/>
    <property type="match status" value="3"/>
</dbReference>
<dbReference type="PROSITE" id="PS50853">
    <property type="entry name" value="FN3"/>
    <property type="match status" value="9"/>
</dbReference>
<dbReference type="PROSITE" id="PS00107">
    <property type="entry name" value="PROTEIN_KINASE_ATP"/>
    <property type="match status" value="1"/>
</dbReference>
<dbReference type="PROSITE" id="PS50011">
    <property type="entry name" value="PROTEIN_KINASE_DOM"/>
    <property type="match status" value="1"/>
</dbReference>
<dbReference type="PROSITE" id="PS00109">
    <property type="entry name" value="PROTEIN_KINASE_TYR"/>
    <property type="match status" value="1"/>
</dbReference>
<evidence type="ECO:0000250" key="1">
    <source>
        <dbReference type="UniProtKB" id="P08922"/>
    </source>
</evidence>
<evidence type="ECO:0000250" key="2">
    <source>
        <dbReference type="UniProtKB" id="Q78DX7"/>
    </source>
</evidence>
<evidence type="ECO:0000255" key="3"/>
<evidence type="ECO:0000255" key="4">
    <source>
        <dbReference type="PROSITE-ProRule" id="PRU00159"/>
    </source>
</evidence>
<evidence type="ECO:0000255" key="5">
    <source>
        <dbReference type="PROSITE-ProRule" id="PRU00316"/>
    </source>
</evidence>
<evidence type="ECO:0000255" key="6">
    <source>
        <dbReference type="PROSITE-ProRule" id="PRU10028"/>
    </source>
</evidence>
<evidence type="ECO:0000256" key="7">
    <source>
        <dbReference type="SAM" id="MobiDB-lite"/>
    </source>
</evidence>
<evidence type="ECO:0000269" key="8">
    <source>
    </source>
</evidence>
<evidence type="ECO:0000303" key="9">
    <source>
    </source>
</evidence>
<evidence type="ECO:0000305" key="10"/>
<name>ROS1_RAT</name>
<keyword id="KW-0025">Alternative splicing</keyword>
<keyword id="KW-0067">ATP-binding</keyword>
<keyword id="KW-1003">Cell membrane</keyword>
<keyword id="KW-0325">Glycoprotein</keyword>
<keyword id="KW-0418">Kinase</keyword>
<keyword id="KW-0472">Membrane</keyword>
<keyword id="KW-0547">Nucleotide-binding</keyword>
<keyword id="KW-0597">Phosphoprotein</keyword>
<keyword id="KW-0675">Receptor</keyword>
<keyword id="KW-1185">Reference proteome</keyword>
<keyword id="KW-0677">Repeat</keyword>
<keyword id="KW-0732">Signal</keyword>
<keyword id="KW-0808">Transferase</keyword>
<keyword id="KW-0812">Transmembrane</keyword>
<keyword id="KW-1133">Transmembrane helix</keyword>
<keyword id="KW-0829">Tyrosine-protein kinase</keyword>
<gene>
    <name type="primary">Ros1</name>
</gene>
<organism>
    <name type="scientific">Rattus norvegicus</name>
    <name type="common">Rat</name>
    <dbReference type="NCBI Taxonomy" id="10116"/>
    <lineage>
        <taxon>Eukaryota</taxon>
        <taxon>Metazoa</taxon>
        <taxon>Chordata</taxon>
        <taxon>Craniata</taxon>
        <taxon>Vertebrata</taxon>
        <taxon>Euteleostomi</taxon>
        <taxon>Mammalia</taxon>
        <taxon>Eutheria</taxon>
        <taxon>Euarchontoglires</taxon>
        <taxon>Glires</taxon>
        <taxon>Rodentia</taxon>
        <taxon>Myomorpha</taxon>
        <taxon>Muroidea</taxon>
        <taxon>Muridae</taxon>
        <taxon>Murinae</taxon>
        <taxon>Rattus</taxon>
    </lineage>
</organism>
<reference key="1">
    <citation type="journal article" date="1990" name="J. Virol.">
        <title>Tissue-specific expression of rat c-ros-1 gene and partial structural similarity of its predicted products with sev protein of Drosophila melanogaster.</title>
        <authorList>
            <person name="Matsushime H."/>
            <person name="Shibuya M."/>
        </authorList>
    </citation>
    <scope>NUCLEOTIDE SEQUENCE [MRNA] (ISOFORMS 1 AND 2)</scope>
    <scope>TISSUE SPECIFICITY</scope>
</reference>